<gene>
    <name type="primary">TDA2</name>
    <name type="ORF">VIN13_1342</name>
</gene>
<sequence>MQIEIKDGRSDNSPLPERKLVTLIQESYDSLKDDNEINLSTESTSNLLIKLVLEKLEKHSSLYKYIASVTTLNIEGLNEENANFSLKNDIGASWESKKRWYIQL</sequence>
<name>TDA2_YEASV</name>
<comment type="subcellular location">
    <subcellularLocation>
        <location evidence="1">Cytoplasm</location>
    </subcellularLocation>
    <subcellularLocation>
        <location evidence="1">Cell projection</location>
    </subcellularLocation>
    <text evidence="1">Concentrates at cytoplasmic punctate structures and localizes at the mating projection tip.</text>
</comment>
<comment type="similarity">
    <text evidence="2">Belongs to the TDA2 family.</text>
</comment>
<protein>
    <recommendedName>
        <fullName>Topoisomerase I damage affected protein 2</fullName>
    </recommendedName>
</protein>
<feature type="chain" id="PRO_0000410742" description="Topoisomerase I damage affected protein 2">
    <location>
        <begin position="1"/>
        <end position="104"/>
    </location>
</feature>
<evidence type="ECO:0000250" key="1">
    <source>
        <dbReference type="UniProtKB" id="P40045"/>
    </source>
</evidence>
<evidence type="ECO:0000305" key="2"/>
<organism>
    <name type="scientific">Saccharomyces cerevisiae (strain VIN 13)</name>
    <name type="common">Baker's yeast</name>
    <dbReference type="NCBI Taxonomy" id="764099"/>
    <lineage>
        <taxon>Eukaryota</taxon>
        <taxon>Fungi</taxon>
        <taxon>Dikarya</taxon>
        <taxon>Ascomycota</taxon>
        <taxon>Saccharomycotina</taxon>
        <taxon>Saccharomycetes</taxon>
        <taxon>Saccharomycetales</taxon>
        <taxon>Saccharomycetaceae</taxon>
        <taxon>Saccharomyces</taxon>
    </lineage>
</organism>
<dbReference type="EMBL" id="ADXC01000028">
    <property type="protein sequence ID" value="EGA79201.1"/>
    <property type="molecule type" value="Genomic_DNA"/>
</dbReference>
<dbReference type="SMR" id="E7LTG2"/>
<dbReference type="HOGENOM" id="CLU_137494_1_0_1"/>
<dbReference type="OMA" id="TIIWISK"/>
<dbReference type="OrthoDB" id="38744at4893"/>
<dbReference type="GO" id="GO:0042995">
    <property type="term" value="C:cell projection"/>
    <property type="evidence" value="ECO:0007669"/>
    <property type="project" value="UniProtKB-SubCell"/>
</dbReference>
<dbReference type="GO" id="GO:0005737">
    <property type="term" value="C:cytoplasm"/>
    <property type="evidence" value="ECO:0007669"/>
    <property type="project" value="UniProtKB-SubCell"/>
</dbReference>
<accession>E7LTG2</accession>
<keyword id="KW-0966">Cell projection</keyword>
<keyword id="KW-0963">Cytoplasm</keyword>
<proteinExistence type="inferred from homology"/>
<reference key="1">
    <citation type="journal article" date="2011" name="PLoS Genet.">
        <title>Whole-genome comparison reveals novel genetic elements that characterize the genome of industrial strains of Saccharomyces cerevisiae.</title>
        <authorList>
            <person name="Borneman A.R."/>
            <person name="Desany B.A."/>
            <person name="Riches D."/>
            <person name="Affourtit J.P."/>
            <person name="Forgan A.H."/>
            <person name="Pretorius I.S."/>
            <person name="Egholm M."/>
            <person name="Chambers P.J."/>
        </authorList>
    </citation>
    <scope>NUCLEOTIDE SEQUENCE [LARGE SCALE GENOMIC DNA]</scope>
    <source>
        <strain>VIN 13</strain>
    </source>
</reference>